<evidence type="ECO:0000255" key="1">
    <source>
        <dbReference type="HAMAP-Rule" id="MF_00773"/>
    </source>
</evidence>
<evidence type="ECO:0000305" key="2"/>
<gene>
    <name evidence="1" type="primary">rpl24e</name>
    <name type="ordered locus">MTH_257</name>
</gene>
<comment type="function">
    <text evidence="1">Binds to the 23S rRNA.</text>
</comment>
<comment type="cofactor">
    <cofactor evidence="1">
        <name>Zn(2+)</name>
        <dbReference type="ChEBI" id="CHEBI:29105"/>
    </cofactor>
    <text evidence="1">Binds 1 zinc ion per subunit.</text>
</comment>
<comment type="subunit">
    <text evidence="1">Part of the 50S ribosomal subunit. Forms a cluster with proteins L3 and L14.</text>
</comment>
<comment type="similarity">
    <text evidence="1">Belongs to the eukaryotic ribosomal protein eL24 family.</text>
</comment>
<feature type="chain" id="PRO_0000136920" description="Large ribosomal subunit protein eL24">
    <location>
        <begin position="1"/>
        <end position="53"/>
    </location>
</feature>
<feature type="zinc finger region" description="C4-type" evidence="1">
    <location>
        <begin position="4"/>
        <end position="34"/>
    </location>
</feature>
<feature type="binding site" evidence="1">
    <location>
        <position position="4"/>
    </location>
    <ligand>
        <name>Zn(2+)</name>
        <dbReference type="ChEBI" id="CHEBI:29105"/>
    </ligand>
</feature>
<feature type="binding site" evidence="1">
    <location>
        <position position="7"/>
    </location>
    <ligand>
        <name>Zn(2+)</name>
        <dbReference type="ChEBI" id="CHEBI:29105"/>
    </ligand>
</feature>
<feature type="binding site" evidence="1">
    <location>
        <position position="30"/>
    </location>
    <ligand>
        <name>Zn(2+)</name>
        <dbReference type="ChEBI" id="CHEBI:29105"/>
    </ligand>
</feature>
<feature type="binding site" evidence="1">
    <location>
        <position position="34"/>
    </location>
    <ligand>
        <name>Zn(2+)</name>
        <dbReference type="ChEBI" id="CHEBI:29105"/>
    </ligand>
</feature>
<accession>O26357</accession>
<dbReference type="EMBL" id="AE000666">
    <property type="protein sequence ID" value="AAB84763.1"/>
    <property type="molecule type" value="Genomic_DNA"/>
</dbReference>
<dbReference type="PIR" id="C69132">
    <property type="entry name" value="C69132"/>
</dbReference>
<dbReference type="RefSeq" id="WP_010875896.1">
    <property type="nucleotide sequence ID" value="NC_000916.1"/>
</dbReference>
<dbReference type="SMR" id="O26357"/>
<dbReference type="FunCoup" id="O26357">
    <property type="interactions" value="60"/>
</dbReference>
<dbReference type="STRING" id="187420.MTH_257"/>
<dbReference type="PaxDb" id="187420-MTH_257"/>
<dbReference type="EnsemblBacteria" id="AAB84763">
    <property type="protein sequence ID" value="AAB84763"/>
    <property type="gene ID" value="MTH_257"/>
</dbReference>
<dbReference type="KEGG" id="mth:MTH_257"/>
<dbReference type="PATRIC" id="fig|187420.15.peg.226"/>
<dbReference type="HOGENOM" id="CLU_190191_0_0_2"/>
<dbReference type="InParanoid" id="O26357"/>
<dbReference type="Proteomes" id="UP000005223">
    <property type="component" value="Chromosome"/>
</dbReference>
<dbReference type="GO" id="GO:1990904">
    <property type="term" value="C:ribonucleoprotein complex"/>
    <property type="evidence" value="ECO:0007669"/>
    <property type="project" value="UniProtKB-KW"/>
</dbReference>
<dbReference type="GO" id="GO:0005840">
    <property type="term" value="C:ribosome"/>
    <property type="evidence" value="ECO:0007669"/>
    <property type="project" value="UniProtKB-KW"/>
</dbReference>
<dbReference type="GO" id="GO:0019843">
    <property type="term" value="F:rRNA binding"/>
    <property type="evidence" value="ECO:0007669"/>
    <property type="project" value="UniProtKB-UniRule"/>
</dbReference>
<dbReference type="GO" id="GO:0003735">
    <property type="term" value="F:structural constituent of ribosome"/>
    <property type="evidence" value="ECO:0007669"/>
    <property type="project" value="InterPro"/>
</dbReference>
<dbReference type="GO" id="GO:0008270">
    <property type="term" value="F:zinc ion binding"/>
    <property type="evidence" value="ECO:0007669"/>
    <property type="project" value="UniProtKB-UniRule"/>
</dbReference>
<dbReference type="GO" id="GO:0006412">
    <property type="term" value="P:translation"/>
    <property type="evidence" value="ECO:0007669"/>
    <property type="project" value="UniProtKB-UniRule"/>
</dbReference>
<dbReference type="CDD" id="cd00472">
    <property type="entry name" value="Ribosomal_L24e_L24"/>
    <property type="match status" value="1"/>
</dbReference>
<dbReference type="Gene3D" id="2.30.170.20">
    <property type="entry name" value="Ribosomal protein L24e"/>
    <property type="match status" value="1"/>
</dbReference>
<dbReference type="HAMAP" id="MF_00773">
    <property type="entry name" value="Ribosomal_eL24"/>
    <property type="match status" value="1"/>
</dbReference>
<dbReference type="InterPro" id="IPR038630">
    <property type="entry name" value="L24e/L24_sf"/>
</dbReference>
<dbReference type="InterPro" id="IPR056366">
    <property type="entry name" value="Ribosomal_eL24"/>
</dbReference>
<dbReference type="InterPro" id="IPR055345">
    <property type="entry name" value="Ribosomal_eL24-rel_arc"/>
</dbReference>
<dbReference type="InterPro" id="IPR000988">
    <property type="entry name" value="Ribosomal_eL24-rel_N"/>
</dbReference>
<dbReference type="InterPro" id="IPR023442">
    <property type="entry name" value="Ribosomal_eL24_CS"/>
</dbReference>
<dbReference type="InterPro" id="IPR011017">
    <property type="entry name" value="TRASH_dom"/>
</dbReference>
<dbReference type="NCBIfam" id="NF034186">
    <property type="entry name" value="PRK14891.1-1"/>
    <property type="match status" value="1"/>
</dbReference>
<dbReference type="PANTHER" id="PTHR10792">
    <property type="entry name" value="60S RIBOSOMAL PROTEIN L24"/>
    <property type="match status" value="1"/>
</dbReference>
<dbReference type="PANTHER" id="PTHR10792:SF1">
    <property type="entry name" value="RIBOSOMAL PROTEIN L24"/>
    <property type="match status" value="1"/>
</dbReference>
<dbReference type="Pfam" id="PF01246">
    <property type="entry name" value="Ribosomal_L24e"/>
    <property type="match status" value="1"/>
</dbReference>
<dbReference type="SMART" id="SM00746">
    <property type="entry name" value="TRASH"/>
    <property type="match status" value="1"/>
</dbReference>
<dbReference type="SUPFAM" id="SSF57716">
    <property type="entry name" value="Glucocorticoid receptor-like (DNA-binding domain)"/>
    <property type="match status" value="1"/>
</dbReference>
<dbReference type="PROSITE" id="PS01073">
    <property type="entry name" value="RIBOSOMAL_L24E"/>
    <property type="match status" value="1"/>
</dbReference>
<name>RL24E_METTH</name>
<sequence length="53" mass="6274">MRVCSFCHEEIEPGTGKMYVKRDGTIYFFCSSKCEKNMIKLGRVPRKVKWVKK</sequence>
<protein>
    <recommendedName>
        <fullName evidence="1">Large ribosomal subunit protein eL24</fullName>
    </recommendedName>
    <alternativeName>
        <fullName evidence="2">50S ribosomal protein L24e</fullName>
    </alternativeName>
</protein>
<keyword id="KW-0479">Metal-binding</keyword>
<keyword id="KW-1185">Reference proteome</keyword>
<keyword id="KW-0687">Ribonucleoprotein</keyword>
<keyword id="KW-0689">Ribosomal protein</keyword>
<keyword id="KW-0694">RNA-binding</keyword>
<keyword id="KW-0699">rRNA-binding</keyword>
<keyword id="KW-0862">Zinc</keyword>
<keyword id="KW-0863">Zinc-finger</keyword>
<organism>
    <name type="scientific">Methanothermobacter thermautotrophicus (strain ATCC 29096 / DSM 1053 / JCM 10044 / NBRC 100330 / Delta H)</name>
    <name type="common">Methanobacterium thermoautotrophicum</name>
    <dbReference type="NCBI Taxonomy" id="187420"/>
    <lineage>
        <taxon>Archaea</taxon>
        <taxon>Methanobacteriati</taxon>
        <taxon>Methanobacteriota</taxon>
        <taxon>Methanomada group</taxon>
        <taxon>Methanobacteria</taxon>
        <taxon>Methanobacteriales</taxon>
        <taxon>Methanobacteriaceae</taxon>
        <taxon>Methanothermobacter</taxon>
    </lineage>
</organism>
<proteinExistence type="inferred from homology"/>
<reference key="1">
    <citation type="journal article" date="1997" name="J. Bacteriol.">
        <title>Complete genome sequence of Methanobacterium thermoautotrophicum deltaH: functional analysis and comparative genomics.</title>
        <authorList>
            <person name="Smith D.R."/>
            <person name="Doucette-Stamm L.A."/>
            <person name="Deloughery C."/>
            <person name="Lee H.-M."/>
            <person name="Dubois J."/>
            <person name="Aldredge T."/>
            <person name="Bashirzadeh R."/>
            <person name="Blakely D."/>
            <person name="Cook R."/>
            <person name="Gilbert K."/>
            <person name="Harrison D."/>
            <person name="Hoang L."/>
            <person name="Keagle P."/>
            <person name="Lumm W."/>
            <person name="Pothier B."/>
            <person name="Qiu D."/>
            <person name="Spadafora R."/>
            <person name="Vicare R."/>
            <person name="Wang Y."/>
            <person name="Wierzbowski J."/>
            <person name="Gibson R."/>
            <person name="Jiwani N."/>
            <person name="Caruso A."/>
            <person name="Bush D."/>
            <person name="Safer H."/>
            <person name="Patwell D."/>
            <person name="Prabhakar S."/>
            <person name="McDougall S."/>
            <person name="Shimer G."/>
            <person name="Goyal A."/>
            <person name="Pietrovski S."/>
            <person name="Church G.M."/>
            <person name="Daniels C.J."/>
            <person name="Mao J.-I."/>
            <person name="Rice P."/>
            <person name="Noelling J."/>
            <person name="Reeve J.N."/>
        </authorList>
    </citation>
    <scope>NUCLEOTIDE SEQUENCE [LARGE SCALE GENOMIC DNA]</scope>
    <source>
        <strain>ATCC 29096 / DSM 1053 / JCM 10044 / NBRC 100330 / Delta H</strain>
    </source>
</reference>